<keyword id="KW-0067">ATP-binding</keyword>
<keyword id="KW-0460">Magnesium</keyword>
<keyword id="KW-0479">Metal-binding</keyword>
<keyword id="KW-0547">Nucleotide-binding</keyword>
<keyword id="KW-0548">Nucleotidyltransferase</keyword>
<keyword id="KW-1185">Reference proteome</keyword>
<keyword id="KW-0692">RNA repair</keyword>
<keyword id="KW-0694">RNA-binding</keyword>
<keyword id="KW-0808">Transferase</keyword>
<keyword id="KW-0819">tRNA processing</keyword>
<organism>
    <name type="scientific">Methanococcus maripaludis (strain DSM 14266 / JCM 13030 / NBRC 101832 / S2 / LL)</name>
    <dbReference type="NCBI Taxonomy" id="267377"/>
    <lineage>
        <taxon>Archaea</taxon>
        <taxon>Methanobacteriati</taxon>
        <taxon>Methanobacteriota</taxon>
        <taxon>Methanomada group</taxon>
        <taxon>Methanococci</taxon>
        <taxon>Methanococcales</taxon>
        <taxon>Methanococcaceae</taxon>
        <taxon>Methanococcus</taxon>
    </lineage>
</organism>
<evidence type="ECO:0000255" key="1">
    <source>
        <dbReference type="HAMAP-Rule" id="MF_01264"/>
    </source>
</evidence>
<name>CCA_METMP</name>
<sequence length="444" mass="52133">MKKLNADDYIDILNDVLKDICPTDSEKEELKIFSDKIISKIKDISKYPVLDIIQVGSTARDANLKNDHDIDIFLRFEKETDRDMLKELGLKLGKDVINYFNGKSWIEYAEHPYVSGEIGKFNLDIVPCYDIENCEKIISAVDRTPLHNEFLLNAYENNDLSNDIRLLKKFLKGLGIYGSDLKTAGFSGYLCELLILKYRGFLNLLSAVQTWKPKHSIVLDEIYEMYDLKKDHDFLKFNDSLVVYDPVDLNRNVAAALNKENLCKFIFYSKMFLKKPSKEFFYGFYKKTTDLLNQRKRGYLITLEILRPENIVEDVIYPQMEKIQKSINKLVKEHDFEYLQYQNFADDNTCYLSWEFLIHELPDVKLRIGPPVYSEQGVLNFITHNEHYFVKECNVCAYKTRKYKNIQILFEDIVNGKLKNIITYPKYVCPENAKIRLGTFIERK</sequence>
<accession>Q6LYP1</accession>
<reference key="1">
    <citation type="journal article" date="2004" name="J. Bacteriol.">
        <title>Complete genome sequence of the genetically tractable hydrogenotrophic methanogen Methanococcus maripaludis.</title>
        <authorList>
            <person name="Hendrickson E.L."/>
            <person name="Kaul R."/>
            <person name="Zhou Y."/>
            <person name="Bovee D."/>
            <person name="Chapman P."/>
            <person name="Chung J."/>
            <person name="Conway de Macario E."/>
            <person name="Dodsworth J.A."/>
            <person name="Gillett W."/>
            <person name="Graham D.E."/>
            <person name="Hackett M."/>
            <person name="Haydock A.K."/>
            <person name="Kang A."/>
            <person name="Land M.L."/>
            <person name="Levy R."/>
            <person name="Lie T.J."/>
            <person name="Major T.A."/>
            <person name="Moore B.C."/>
            <person name="Porat I."/>
            <person name="Palmeiri A."/>
            <person name="Rouse G."/>
            <person name="Saenphimmachak C."/>
            <person name="Soell D."/>
            <person name="Van Dien S."/>
            <person name="Wang T."/>
            <person name="Whitman W.B."/>
            <person name="Xia Q."/>
            <person name="Zhang Y."/>
            <person name="Larimer F.W."/>
            <person name="Olson M.V."/>
            <person name="Leigh J.A."/>
        </authorList>
    </citation>
    <scope>NUCLEOTIDE SEQUENCE [LARGE SCALE GENOMIC DNA]</scope>
    <source>
        <strain>DSM 14266 / JCM 13030 / NBRC 101832 / S2 / LL</strain>
    </source>
</reference>
<proteinExistence type="inferred from homology"/>
<feature type="chain" id="PRO_0000139072" description="CCA-adding enzyme">
    <location>
        <begin position="1"/>
        <end position="444"/>
    </location>
</feature>
<feature type="binding site" evidence="1">
    <location>
        <position position="57"/>
    </location>
    <ligand>
        <name>ATP</name>
        <dbReference type="ChEBI" id="CHEBI:30616"/>
    </ligand>
</feature>
<feature type="binding site" evidence="1">
    <location>
        <position position="57"/>
    </location>
    <ligand>
        <name>CTP</name>
        <dbReference type="ChEBI" id="CHEBI:37563"/>
    </ligand>
</feature>
<feature type="binding site" evidence="1">
    <location>
        <position position="60"/>
    </location>
    <ligand>
        <name>ATP</name>
        <dbReference type="ChEBI" id="CHEBI:30616"/>
    </ligand>
</feature>
<feature type="binding site" evidence="1">
    <location>
        <position position="60"/>
    </location>
    <ligand>
        <name>CTP</name>
        <dbReference type="ChEBI" id="CHEBI:37563"/>
    </ligand>
</feature>
<feature type="binding site" evidence="1">
    <location>
        <position position="69"/>
    </location>
    <ligand>
        <name>Mg(2+)</name>
        <dbReference type="ChEBI" id="CHEBI:18420"/>
    </ligand>
</feature>
<feature type="binding site" evidence="1">
    <location>
        <position position="71"/>
    </location>
    <ligand>
        <name>Mg(2+)</name>
        <dbReference type="ChEBI" id="CHEBI:18420"/>
    </ligand>
</feature>
<feature type="binding site" evidence="1">
    <location>
        <position position="124"/>
    </location>
    <ligand>
        <name>Mg(2+)</name>
        <dbReference type="ChEBI" id="CHEBI:18420"/>
    </ligand>
</feature>
<feature type="binding site" evidence="1">
    <location>
        <position position="147"/>
    </location>
    <ligand>
        <name>ATP</name>
        <dbReference type="ChEBI" id="CHEBI:30616"/>
    </ligand>
</feature>
<feature type="binding site" evidence="1">
    <location>
        <position position="147"/>
    </location>
    <ligand>
        <name>CTP</name>
        <dbReference type="ChEBI" id="CHEBI:37563"/>
    </ligand>
</feature>
<feature type="binding site" evidence="1">
    <location>
        <position position="168"/>
    </location>
    <ligand>
        <name>ATP</name>
        <dbReference type="ChEBI" id="CHEBI:30616"/>
    </ligand>
</feature>
<feature type="binding site" evidence="1">
    <location>
        <position position="168"/>
    </location>
    <ligand>
        <name>CTP</name>
        <dbReference type="ChEBI" id="CHEBI:37563"/>
    </ligand>
</feature>
<feature type="binding site" evidence="1">
    <location>
        <position position="177"/>
    </location>
    <ligand>
        <name>ATP</name>
        <dbReference type="ChEBI" id="CHEBI:30616"/>
    </ligand>
</feature>
<feature type="binding site" evidence="1">
    <location>
        <position position="177"/>
    </location>
    <ligand>
        <name>CTP</name>
        <dbReference type="ChEBI" id="CHEBI:37563"/>
    </ligand>
</feature>
<comment type="function">
    <text evidence="1">Catalyzes the addition and repair of the essential 3'-terminal CCA sequence in tRNAs without using a nucleic acid template. Adds these three nucleotides in the order of C, C, and A to the tRNA nucleotide-73, using CTP and ATP as substrates and producing inorganic pyrophosphate. tRNA 3'-terminal CCA addition is required both for tRNA processing and repair. Also involved in tRNA surveillance by mediating tandem CCA addition to generate a CCACCA at the 3' terminus of unstable tRNAs. While stable tRNAs receive only 3'-terminal CCA, unstable tRNAs are marked with CCACCA and rapidly degraded.</text>
</comment>
<comment type="catalytic activity">
    <reaction evidence="1">
        <text>a tRNA precursor + 2 CTP + ATP = a tRNA with a 3' CCA end + 3 diphosphate</text>
        <dbReference type="Rhea" id="RHEA:14433"/>
        <dbReference type="Rhea" id="RHEA-COMP:10465"/>
        <dbReference type="Rhea" id="RHEA-COMP:10468"/>
        <dbReference type="ChEBI" id="CHEBI:30616"/>
        <dbReference type="ChEBI" id="CHEBI:33019"/>
        <dbReference type="ChEBI" id="CHEBI:37563"/>
        <dbReference type="ChEBI" id="CHEBI:74896"/>
        <dbReference type="ChEBI" id="CHEBI:83071"/>
        <dbReference type="EC" id="2.7.7.72"/>
    </reaction>
</comment>
<comment type="catalytic activity">
    <reaction evidence="1">
        <text>a tRNA with a 3' CCA end + 2 CTP + ATP = a tRNA with a 3' CCACCA end + 3 diphosphate</text>
        <dbReference type="Rhea" id="RHEA:76235"/>
        <dbReference type="Rhea" id="RHEA-COMP:10468"/>
        <dbReference type="Rhea" id="RHEA-COMP:18655"/>
        <dbReference type="ChEBI" id="CHEBI:30616"/>
        <dbReference type="ChEBI" id="CHEBI:33019"/>
        <dbReference type="ChEBI" id="CHEBI:37563"/>
        <dbReference type="ChEBI" id="CHEBI:83071"/>
        <dbReference type="ChEBI" id="CHEBI:195187"/>
    </reaction>
    <physiologicalReaction direction="left-to-right" evidence="1">
        <dbReference type="Rhea" id="RHEA:76236"/>
    </physiologicalReaction>
</comment>
<comment type="cofactor">
    <cofactor evidence="1">
        <name>Mg(2+)</name>
        <dbReference type="ChEBI" id="CHEBI:18420"/>
    </cofactor>
</comment>
<comment type="subunit">
    <text evidence="1">Homodimer.</text>
</comment>
<comment type="miscellaneous">
    <text evidence="1">A single active site specifically recognizes both ATP and CTP and is responsible for their addition.</text>
</comment>
<comment type="similarity">
    <text evidence="1">Belongs to the tRNA nucleotidyltransferase/poly(A) polymerase family. Archaeal CCA-adding enzyme subfamily.</text>
</comment>
<protein>
    <recommendedName>
        <fullName evidence="1">CCA-adding enzyme</fullName>
        <ecNumber evidence="1">2.7.7.72</ecNumber>
    </recommendedName>
    <alternativeName>
        <fullName evidence="1">CCA tRNA nucleotidyltransferase</fullName>
    </alternativeName>
    <alternativeName>
        <fullName evidence="1">tRNA CCA-pyrophosphorylase</fullName>
    </alternativeName>
    <alternativeName>
        <fullName evidence="1">tRNA adenylyl-/cytidylyl- transferase</fullName>
    </alternativeName>
    <alternativeName>
        <fullName evidence="1">tRNA nucleotidyltransferase</fullName>
    </alternativeName>
    <alternativeName>
        <fullName evidence="1">tRNA-NT</fullName>
    </alternativeName>
</protein>
<dbReference type="EC" id="2.7.7.72" evidence="1"/>
<dbReference type="EMBL" id="BX950229">
    <property type="protein sequence ID" value="CAF30505.1"/>
    <property type="molecule type" value="Genomic_DNA"/>
</dbReference>
<dbReference type="RefSeq" id="WP_011170893.1">
    <property type="nucleotide sequence ID" value="NC_005791.1"/>
</dbReference>
<dbReference type="SMR" id="Q6LYP1"/>
<dbReference type="STRING" id="267377.MMP0949"/>
<dbReference type="EnsemblBacteria" id="CAF30505">
    <property type="protein sequence ID" value="CAF30505"/>
    <property type="gene ID" value="MMP0949"/>
</dbReference>
<dbReference type="GeneID" id="2761506"/>
<dbReference type="KEGG" id="mmp:MMP0949"/>
<dbReference type="PATRIC" id="fig|267377.15.peg.977"/>
<dbReference type="eggNOG" id="arCOG04249">
    <property type="taxonomic scope" value="Archaea"/>
</dbReference>
<dbReference type="HOGENOM" id="CLU_044679_1_0_2"/>
<dbReference type="OrthoDB" id="7378at2157"/>
<dbReference type="Proteomes" id="UP000000590">
    <property type="component" value="Chromosome"/>
</dbReference>
<dbReference type="GO" id="GO:0005524">
    <property type="term" value="F:ATP binding"/>
    <property type="evidence" value="ECO:0007669"/>
    <property type="project" value="UniProtKB-UniRule"/>
</dbReference>
<dbReference type="GO" id="GO:0004810">
    <property type="term" value="F:CCA tRNA nucleotidyltransferase activity"/>
    <property type="evidence" value="ECO:0007669"/>
    <property type="project" value="UniProtKB-UniRule"/>
</dbReference>
<dbReference type="GO" id="GO:0000287">
    <property type="term" value="F:magnesium ion binding"/>
    <property type="evidence" value="ECO:0007669"/>
    <property type="project" value="UniProtKB-UniRule"/>
</dbReference>
<dbReference type="GO" id="GO:0000049">
    <property type="term" value="F:tRNA binding"/>
    <property type="evidence" value="ECO:0007669"/>
    <property type="project" value="UniProtKB-UniRule"/>
</dbReference>
<dbReference type="GO" id="GO:0042245">
    <property type="term" value="P:RNA repair"/>
    <property type="evidence" value="ECO:0007669"/>
    <property type="project" value="UniProtKB-KW"/>
</dbReference>
<dbReference type="GO" id="GO:0001680">
    <property type="term" value="P:tRNA 3'-terminal CCA addition"/>
    <property type="evidence" value="ECO:0007669"/>
    <property type="project" value="UniProtKB-UniRule"/>
</dbReference>
<dbReference type="CDD" id="cd05400">
    <property type="entry name" value="NT_2-5OAS_ClassI-CCAase"/>
    <property type="match status" value="1"/>
</dbReference>
<dbReference type="Gene3D" id="3.30.460.10">
    <property type="entry name" value="Beta Polymerase, domain 2"/>
    <property type="match status" value="1"/>
</dbReference>
<dbReference type="Gene3D" id="1.10.1410.30">
    <property type="entry name" value="CCA tRNA nucleotidyltransferase, domain 2"/>
    <property type="match status" value="1"/>
</dbReference>
<dbReference type="Gene3D" id="3.30.70.590">
    <property type="entry name" value="Poly(A) polymerase predicted RNA binding domain"/>
    <property type="match status" value="1"/>
</dbReference>
<dbReference type="HAMAP" id="MF_01264">
    <property type="entry name" value="CCA_arch"/>
    <property type="match status" value="1"/>
</dbReference>
<dbReference type="InterPro" id="IPR048833">
    <property type="entry name" value="CAA_C"/>
</dbReference>
<dbReference type="InterPro" id="IPR008229">
    <property type="entry name" value="CCA-adding_arc"/>
</dbReference>
<dbReference type="InterPro" id="IPR042090">
    <property type="entry name" value="CCA_tRNA_nucleotrans_2"/>
</dbReference>
<dbReference type="InterPro" id="IPR006116">
    <property type="entry name" value="NT_2-5OAS_ClassI-CCAase"/>
</dbReference>
<dbReference type="InterPro" id="IPR043519">
    <property type="entry name" value="NT_sf"/>
</dbReference>
<dbReference type="InterPro" id="IPR011068">
    <property type="entry name" value="NuclTrfase_I-like_C"/>
</dbReference>
<dbReference type="InterPro" id="IPR002934">
    <property type="entry name" value="Polymerase_NTP_transf_dom"/>
</dbReference>
<dbReference type="InterPro" id="IPR015329">
    <property type="entry name" value="tRNA_NucTransf2"/>
</dbReference>
<dbReference type="NCBIfam" id="TIGR03671">
    <property type="entry name" value="cca_archaeal"/>
    <property type="match status" value="1"/>
</dbReference>
<dbReference type="PANTHER" id="PTHR39643">
    <property type="entry name" value="CCA-ADDING ENZYME"/>
    <property type="match status" value="1"/>
</dbReference>
<dbReference type="PANTHER" id="PTHR39643:SF1">
    <property type="entry name" value="CCA-ADDING ENZYME"/>
    <property type="match status" value="1"/>
</dbReference>
<dbReference type="Pfam" id="PF21133">
    <property type="entry name" value="CAA_C"/>
    <property type="match status" value="1"/>
</dbReference>
<dbReference type="Pfam" id="PF01909">
    <property type="entry name" value="NTP_transf_2"/>
    <property type="match status" value="1"/>
</dbReference>
<dbReference type="Pfam" id="PF09249">
    <property type="entry name" value="tRNA_NucTransf2"/>
    <property type="match status" value="1"/>
</dbReference>
<dbReference type="PIRSF" id="PIRSF005335">
    <property type="entry name" value="CCA_arch"/>
    <property type="match status" value="1"/>
</dbReference>
<dbReference type="SUPFAM" id="SSF81301">
    <property type="entry name" value="Nucleotidyltransferase"/>
    <property type="match status" value="1"/>
</dbReference>
<dbReference type="SUPFAM" id="SSF55003">
    <property type="entry name" value="PAP/Archaeal CCA-adding enzyme, C-terminal domain"/>
    <property type="match status" value="1"/>
</dbReference>
<dbReference type="SUPFAM" id="SSF81631">
    <property type="entry name" value="PAP/OAS1 substrate-binding domain"/>
    <property type="match status" value="1"/>
</dbReference>
<gene>
    <name evidence="1" type="primary">cca</name>
    <name type="ordered locus">MMP0949</name>
</gene>